<name>RUVA_METCA</name>
<feature type="chain" id="PRO_0000224880" description="Holliday junction branch migration complex subunit RuvA">
    <location>
        <begin position="1"/>
        <end position="201"/>
    </location>
</feature>
<feature type="region of interest" description="Domain I" evidence="1">
    <location>
        <begin position="1"/>
        <end position="64"/>
    </location>
</feature>
<feature type="region of interest" description="Domain II" evidence="1">
    <location>
        <begin position="65"/>
        <end position="143"/>
    </location>
</feature>
<feature type="region of interest" description="Flexible linker" evidence="1">
    <location>
        <begin position="144"/>
        <end position="153"/>
    </location>
</feature>
<feature type="region of interest" description="Domain III" evidence="1">
    <location>
        <begin position="153"/>
        <end position="201"/>
    </location>
</feature>
<gene>
    <name evidence="1" type="primary">ruvA</name>
    <name type="ordered locus">MCA1222</name>
</gene>
<keyword id="KW-0963">Cytoplasm</keyword>
<keyword id="KW-0227">DNA damage</keyword>
<keyword id="KW-0233">DNA recombination</keyword>
<keyword id="KW-0234">DNA repair</keyword>
<keyword id="KW-0238">DNA-binding</keyword>
<keyword id="KW-1185">Reference proteome</keyword>
<reference key="1">
    <citation type="journal article" date="2004" name="PLoS Biol.">
        <title>Genomic insights into methanotrophy: the complete genome sequence of Methylococcus capsulatus (Bath).</title>
        <authorList>
            <person name="Ward N.L."/>
            <person name="Larsen O."/>
            <person name="Sakwa J."/>
            <person name="Bruseth L."/>
            <person name="Khouri H.M."/>
            <person name="Durkin A.S."/>
            <person name="Dimitrov G."/>
            <person name="Jiang L."/>
            <person name="Scanlan D."/>
            <person name="Kang K.H."/>
            <person name="Lewis M.R."/>
            <person name="Nelson K.E."/>
            <person name="Methe B.A."/>
            <person name="Wu M."/>
            <person name="Heidelberg J.F."/>
            <person name="Paulsen I.T."/>
            <person name="Fouts D.E."/>
            <person name="Ravel J."/>
            <person name="Tettelin H."/>
            <person name="Ren Q."/>
            <person name="Read T.D."/>
            <person name="DeBoy R.T."/>
            <person name="Seshadri R."/>
            <person name="Salzberg S.L."/>
            <person name="Jensen H.B."/>
            <person name="Birkeland N.K."/>
            <person name="Nelson W.C."/>
            <person name="Dodson R.J."/>
            <person name="Grindhaug S.H."/>
            <person name="Holt I.E."/>
            <person name="Eidhammer I."/>
            <person name="Jonasen I."/>
            <person name="Vanaken S."/>
            <person name="Utterback T.R."/>
            <person name="Feldblyum T.V."/>
            <person name="Fraser C.M."/>
            <person name="Lillehaug J.R."/>
            <person name="Eisen J.A."/>
        </authorList>
    </citation>
    <scope>NUCLEOTIDE SEQUENCE [LARGE SCALE GENOMIC DNA]</scope>
    <source>
        <strain>ATCC 33009 / NCIMB 11132 / Bath</strain>
    </source>
</reference>
<dbReference type="EMBL" id="AE017282">
    <property type="protein sequence ID" value="AAU92523.1"/>
    <property type="molecule type" value="Genomic_DNA"/>
</dbReference>
<dbReference type="RefSeq" id="WP_010960506.1">
    <property type="nucleotide sequence ID" value="NC_002977.6"/>
</dbReference>
<dbReference type="SMR" id="Q609L1"/>
<dbReference type="STRING" id="243233.MCA1222"/>
<dbReference type="GeneID" id="88223508"/>
<dbReference type="KEGG" id="mca:MCA1222"/>
<dbReference type="eggNOG" id="COG0632">
    <property type="taxonomic scope" value="Bacteria"/>
</dbReference>
<dbReference type="HOGENOM" id="CLU_087936_0_0_6"/>
<dbReference type="Proteomes" id="UP000006821">
    <property type="component" value="Chromosome"/>
</dbReference>
<dbReference type="GO" id="GO:0005737">
    <property type="term" value="C:cytoplasm"/>
    <property type="evidence" value="ECO:0007669"/>
    <property type="project" value="UniProtKB-SubCell"/>
</dbReference>
<dbReference type="GO" id="GO:0009379">
    <property type="term" value="C:Holliday junction helicase complex"/>
    <property type="evidence" value="ECO:0007669"/>
    <property type="project" value="InterPro"/>
</dbReference>
<dbReference type="GO" id="GO:0048476">
    <property type="term" value="C:Holliday junction resolvase complex"/>
    <property type="evidence" value="ECO:0007669"/>
    <property type="project" value="UniProtKB-UniRule"/>
</dbReference>
<dbReference type="GO" id="GO:0005524">
    <property type="term" value="F:ATP binding"/>
    <property type="evidence" value="ECO:0007669"/>
    <property type="project" value="InterPro"/>
</dbReference>
<dbReference type="GO" id="GO:0000400">
    <property type="term" value="F:four-way junction DNA binding"/>
    <property type="evidence" value="ECO:0007669"/>
    <property type="project" value="UniProtKB-UniRule"/>
</dbReference>
<dbReference type="GO" id="GO:0009378">
    <property type="term" value="F:four-way junction helicase activity"/>
    <property type="evidence" value="ECO:0007669"/>
    <property type="project" value="InterPro"/>
</dbReference>
<dbReference type="GO" id="GO:0006310">
    <property type="term" value="P:DNA recombination"/>
    <property type="evidence" value="ECO:0007669"/>
    <property type="project" value="UniProtKB-UniRule"/>
</dbReference>
<dbReference type="GO" id="GO:0006281">
    <property type="term" value="P:DNA repair"/>
    <property type="evidence" value="ECO:0007669"/>
    <property type="project" value="UniProtKB-UniRule"/>
</dbReference>
<dbReference type="CDD" id="cd14332">
    <property type="entry name" value="UBA_RuvA_C"/>
    <property type="match status" value="1"/>
</dbReference>
<dbReference type="Gene3D" id="1.10.150.20">
    <property type="entry name" value="5' to 3' exonuclease, C-terminal subdomain"/>
    <property type="match status" value="1"/>
</dbReference>
<dbReference type="Gene3D" id="1.10.8.10">
    <property type="entry name" value="DNA helicase RuvA subunit, C-terminal domain"/>
    <property type="match status" value="1"/>
</dbReference>
<dbReference type="Gene3D" id="2.40.50.140">
    <property type="entry name" value="Nucleic acid-binding proteins"/>
    <property type="match status" value="1"/>
</dbReference>
<dbReference type="HAMAP" id="MF_00031">
    <property type="entry name" value="DNA_HJ_migration_RuvA"/>
    <property type="match status" value="1"/>
</dbReference>
<dbReference type="InterPro" id="IPR013849">
    <property type="entry name" value="DNA_helicase_Holl-junc_RuvA_I"/>
</dbReference>
<dbReference type="InterPro" id="IPR003583">
    <property type="entry name" value="Hlx-hairpin-Hlx_DNA-bd_motif"/>
</dbReference>
<dbReference type="InterPro" id="IPR012340">
    <property type="entry name" value="NA-bd_OB-fold"/>
</dbReference>
<dbReference type="InterPro" id="IPR000085">
    <property type="entry name" value="RuvA"/>
</dbReference>
<dbReference type="InterPro" id="IPR010994">
    <property type="entry name" value="RuvA_2-like"/>
</dbReference>
<dbReference type="InterPro" id="IPR011114">
    <property type="entry name" value="RuvA_C"/>
</dbReference>
<dbReference type="InterPro" id="IPR036267">
    <property type="entry name" value="RuvA_C_sf"/>
</dbReference>
<dbReference type="NCBIfam" id="TIGR00084">
    <property type="entry name" value="ruvA"/>
    <property type="match status" value="1"/>
</dbReference>
<dbReference type="Pfam" id="PF14520">
    <property type="entry name" value="HHH_5"/>
    <property type="match status" value="1"/>
</dbReference>
<dbReference type="Pfam" id="PF07499">
    <property type="entry name" value="RuvA_C"/>
    <property type="match status" value="1"/>
</dbReference>
<dbReference type="Pfam" id="PF01330">
    <property type="entry name" value="RuvA_N"/>
    <property type="match status" value="1"/>
</dbReference>
<dbReference type="SMART" id="SM00278">
    <property type="entry name" value="HhH1"/>
    <property type="match status" value="2"/>
</dbReference>
<dbReference type="SUPFAM" id="SSF46929">
    <property type="entry name" value="DNA helicase RuvA subunit, C-terminal domain"/>
    <property type="match status" value="1"/>
</dbReference>
<dbReference type="SUPFAM" id="SSF50249">
    <property type="entry name" value="Nucleic acid-binding proteins"/>
    <property type="match status" value="1"/>
</dbReference>
<dbReference type="SUPFAM" id="SSF47781">
    <property type="entry name" value="RuvA domain 2-like"/>
    <property type="match status" value="1"/>
</dbReference>
<proteinExistence type="inferred from homology"/>
<accession>Q609L1</accession>
<sequence>MIGFIRGLLVAKRAPSLLIDVQGLGYELDAPMSTFYNLPEIGAEVRLYTHLQIREDAHSLFGFGTEAERGLFRSLIRVSGIGAKLALAILSGISVDDFRACVERQDSARLVRLPGIGKKTAERLIIELRDRLDIGVPSLAPASFAGGAAPLPAADPADEAVSALIALGFKPQEANTLVARQAAEGRSAEDLIRAALQSAVR</sequence>
<comment type="function">
    <text evidence="1">The RuvA-RuvB-RuvC complex processes Holliday junction (HJ) DNA during genetic recombination and DNA repair, while the RuvA-RuvB complex plays an important role in the rescue of blocked DNA replication forks via replication fork reversal (RFR). RuvA specifically binds to HJ cruciform DNA, conferring on it an open structure. The RuvB hexamer acts as an ATP-dependent pump, pulling dsDNA into and through the RuvAB complex. HJ branch migration allows RuvC to scan DNA until it finds its consensus sequence, where it cleaves and resolves the cruciform DNA.</text>
</comment>
<comment type="subunit">
    <text evidence="1">Homotetramer. Forms an RuvA(8)-RuvB(12)-Holliday junction (HJ) complex. HJ DNA is sandwiched between 2 RuvA tetramers; dsDNA enters through RuvA and exits via RuvB. An RuvB hexamer assembles on each DNA strand where it exits the tetramer. Each RuvB hexamer is contacted by two RuvA subunits (via domain III) on 2 adjacent RuvB subunits; this complex drives branch migration. In the full resolvosome a probable DNA-RuvA(4)-RuvB(12)-RuvC(2) complex forms which resolves the HJ.</text>
</comment>
<comment type="subcellular location">
    <subcellularLocation>
        <location evidence="1">Cytoplasm</location>
    </subcellularLocation>
</comment>
<comment type="domain">
    <text evidence="1">Has three domains with a flexible linker between the domains II and III and assumes an 'L' shape. Domain III is highly mobile and contacts RuvB.</text>
</comment>
<comment type="similarity">
    <text evidence="1">Belongs to the RuvA family.</text>
</comment>
<evidence type="ECO:0000255" key="1">
    <source>
        <dbReference type="HAMAP-Rule" id="MF_00031"/>
    </source>
</evidence>
<organism>
    <name type="scientific">Methylococcus capsulatus (strain ATCC 33009 / NCIMB 11132 / Bath)</name>
    <dbReference type="NCBI Taxonomy" id="243233"/>
    <lineage>
        <taxon>Bacteria</taxon>
        <taxon>Pseudomonadati</taxon>
        <taxon>Pseudomonadota</taxon>
        <taxon>Gammaproteobacteria</taxon>
        <taxon>Methylococcales</taxon>
        <taxon>Methylococcaceae</taxon>
        <taxon>Methylococcus</taxon>
    </lineage>
</organism>
<protein>
    <recommendedName>
        <fullName evidence="1">Holliday junction branch migration complex subunit RuvA</fullName>
    </recommendedName>
</protein>